<evidence type="ECO:0000250" key="1"/>
<evidence type="ECO:0000255" key="2">
    <source>
        <dbReference type="PROSITE-ProRule" id="PRU00836"/>
    </source>
</evidence>
<evidence type="ECO:0000305" key="3"/>
<sequence length="167" mass="19615">MSFGGPNSTPLPSSFDENADFYNENTIDKIWRRFREEPLVPLGCGLTVWAIVGATRSMRKGDHKMTNLYFRRRLYAQGFTIAVLVAGNMYWQKDRLKRKEYEKKVAEKDRMDKRDRWLRELEMRDEEDKAWKERMAKKARGAADEAVGVTQMVKEKTKELKDQTVGK</sequence>
<organism>
    <name type="scientific">Pyrenophora tritici-repentis (strain Pt-1C-BFP)</name>
    <name type="common">Wheat tan spot fungus</name>
    <name type="synonym">Drechslera tritici-repentis</name>
    <dbReference type="NCBI Taxonomy" id="426418"/>
    <lineage>
        <taxon>Eukaryota</taxon>
        <taxon>Fungi</taxon>
        <taxon>Dikarya</taxon>
        <taxon>Ascomycota</taxon>
        <taxon>Pezizomycotina</taxon>
        <taxon>Dothideomycetes</taxon>
        <taxon>Pleosporomycetidae</taxon>
        <taxon>Pleosporales</taxon>
        <taxon>Pleosporineae</taxon>
        <taxon>Pleosporaceae</taxon>
        <taxon>Pyrenophora</taxon>
    </lineage>
</organism>
<comment type="function">
    <text evidence="1">Cytochrome c oxidase subunit which plays a role in assembly of respiratory supercomplexes.</text>
</comment>
<comment type="subunit">
    <text evidence="1">Associates with the respiratory chain complex III/complex IV supercomplex.</text>
</comment>
<comment type="subcellular location">
    <subcellularLocation>
        <location evidence="2">Mitochondrion membrane</location>
        <topology evidence="2">Multi-pass membrane protein</topology>
    </subcellularLocation>
</comment>
<comment type="similarity">
    <text evidence="3">Belongs to the RCF1 family.</text>
</comment>
<reference key="1">
    <citation type="journal article" date="2013" name="G3 (Bethesda)">
        <title>Comparative genomics of a plant-pathogenic fungus, Pyrenophora tritici-repentis, reveals transduplication and the impact of repeat elements on pathogenicity and population divergence.</title>
        <authorList>
            <person name="Manning V.A."/>
            <person name="Pandelova I."/>
            <person name="Dhillon B."/>
            <person name="Wilhelm L.J."/>
            <person name="Goodwin S.B."/>
            <person name="Berlin A.M."/>
            <person name="Figueroa M."/>
            <person name="Freitag M."/>
            <person name="Hane J.K."/>
            <person name="Henrissat B."/>
            <person name="Holman W.H."/>
            <person name="Kodira C.D."/>
            <person name="Martin J."/>
            <person name="Oliver R.P."/>
            <person name="Robbertse B."/>
            <person name="Schackwitz W."/>
            <person name="Schwartz D.C."/>
            <person name="Spatafora J.W."/>
            <person name="Turgeon B.G."/>
            <person name="Yandava C."/>
            <person name="Young S."/>
            <person name="Zhou S."/>
            <person name="Zeng Q."/>
            <person name="Grigoriev I.V."/>
            <person name="Ma L.-J."/>
            <person name="Ciuffetti L.M."/>
        </authorList>
    </citation>
    <scope>NUCLEOTIDE SEQUENCE [LARGE SCALE GENOMIC DNA]</scope>
    <source>
        <strain>Pt-1C-BFP</strain>
    </source>
</reference>
<protein>
    <recommendedName>
        <fullName>Respiratory supercomplex factor 1, mitochondrial</fullName>
    </recommendedName>
</protein>
<name>RCF1_PYRTR</name>
<feature type="chain" id="PRO_0000399653" description="Respiratory supercomplex factor 1, mitochondrial">
    <location>
        <begin position="1"/>
        <end position="167"/>
    </location>
</feature>
<feature type="transmembrane region" description="Helical" evidence="2">
    <location>
        <begin position="39"/>
        <end position="55"/>
    </location>
</feature>
<feature type="transmembrane region" description="Helical" evidence="2">
    <location>
        <begin position="74"/>
        <end position="91"/>
    </location>
</feature>
<feature type="domain" description="HIG1" evidence="2">
    <location>
        <begin position="11"/>
        <end position="102"/>
    </location>
</feature>
<proteinExistence type="inferred from homology"/>
<dbReference type="EMBL" id="DS231621">
    <property type="protein sequence ID" value="EDU49975.1"/>
    <property type="molecule type" value="Genomic_DNA"/>
</dbReference>
<dbReference type="RefSeq" id="XP_001937388.1">
    <property type="nucleotide sequence ID" value="XM_001937353.1"/>
</dbReference>
<dbReference type="FunCoup" id="B2WBP3">
    <property type="interactions" value="71"/>
</dbReference>
<dbReference type="STRING" id="426418.B2WBP3"/>
<dbReference type="EnsemblFungi" id="EDU49975">
    <property type="protein sequence ID" value="EDU49975"/>
    <property type="gene ID" value="PTRG_07056"/>
</dbReference>
<dbReference type="GeneID" id="6345327"/>
<dbReference type="KEGG" id="ptrr:6345327"/>
<dbReference type="eggNOG" id="KOG4431">
    <property type="taxonomic scope" value="Eukaryota"/>
</dbReference>
<dbReference type="HOGENOM" id="CLU_087356_1_0_1"/>
<dbReference type="InParanoid" id="B2WBP3"/>
<dbReference type="OMA" id="QRWIREL"/>
<dbReference type="OrthoDB" id="20537at28556"/>
<dbReference type="Proteomes" id="UP000001471">
    <property type="component" value="Unassembled WGS sequence"/>
</dbReference>
<dbReference type="GO" id="GO:0031966">
    <property type="term" value="C:mitochondrial membrane"/>
    <property type="evidence" value="ECO:0007669"/>
    <property type="project" value="UniProtKB-SubCell"/>
</dbReference>
<dbReference type="GO" id="GO:0097250">
    <property type="term" value="P:mitochondrial respirasome assembly"/>
    <property type="evidence" value="ECO:0007669"/>
    <property type="project" value="TreeGrafter"/>
</dbReference>
<dbReference type="Gene3D" id="6.10.140.1320">
    <property type="match status" value="1"/>
</dbReference>
<dbReference type="InterPro" id="IPR007667">
    <property type="entry name" value="Hypoxia_induced_domain"/>
</dbReference>
<dbReference type="InterPro" id="IPR050355">
    <property type="entry name" value="RCF1"/>
</dbReference>
<dbReference type="PANTHER" id="PTHR12297:SF3">
    <property type="entry name" value="HIG1 DOMAIN FAMILY MEMBER 1A"/>
    <property type="match status" value="1"/>
</dbReference>
<dbReference type="PANTHER" id="PTHR12297">
    <property type="entry name" value="HYPOXIA-INDUCBILE GENE 1 HIG1 -RELATED"/>
    <property type="match status" value="1"/>
</dbReference>
<dbReference type="Pfam" id="PF04588">
    <property type="entry name" value="HIG_1_N"/>
    <property type="match status" value="1"/>
</dbReference>
<dbReference type="PROSITE" id="PS51503">
    <property type="entry name" value="HIG1"/>
    <property type="match status" value="1"/>
</dbReference>
<accession>B2WBP3</accession>
<gene>
    <name type="primary">rcf1</name>
    <name type="synonym">aim31</name>
    <name type="ORF">PTRG_07056</name>
</gene>
<keyword id="KW-0472">Membrane</keyword>
<keyword id="KW-0496">Mitochondrion</keyword>
<keyword id="KW-1185">Reference proteome</keyword>
<keyword id="KW-0812">Transmembrane</keyword>
<keyword id="KW-1133">Transmembrane helix</keyword>